<name>TMM54_MOUSE</name>
<sequence>MCLRIGSLNVDEFRKVLMKTGLVLVVLGHVSFIAAAVLHGTMLRFVATTSDAVVLQYCAVDILSVTSAIVVIVAGISTIVLSRYLPSTPLRWTVFSLSVACALLSLTCALGLLASIAVTFATKGRALLAACTFENPELPTLAPDCPFDPTRIYSSSLCLWAISLIFCLAESMSAVRCAQLMHGLLELRPWWGKSCHHTIQASPEPLDAHDLLSCASSCS</sequence>
<comment type="subcellular location">
    <subcellularLocation>
        <location evidence="2">Membrane</location>
        <topology evidence="2">Multi-pass membrane protein</topology>
    </subcellularLocation>
</comment>
<comment type="similarity">
    <text evidence="2">Belongs to the TMEM54 family.</text>
</comment>
<reference key="1">
    <citation type="journal article" date="2005" name="Science">
        <title>The transcriptional landscape of the mammalian genome.</title>
        <authorList>
            <person name="Carninci P."/>
            <person name="Kasukawa T."/>
            <person name="Katayama S."/>
            <person name="Gough J."/>
            <person name="Frith M.C."/>
            <person name="Maeda N."/>
            <person name="Oyama R."/>
            <person name="Ravasi T."/>
            <person name="Lenhard B."/>
            <person name="Wells C."/>
            <person name="Kodzius R."/>
            <person name="Shimokawa K."/>
            <person name="Bajic V.B."/>
            <person name="Brenner S.E."/>
            <person name="Batalov S."/>
            <person name="Forrest A.R."/>
            <person name="Zavolan M."/>
            <person name="Davis M.J."/>
            <person name="Wilming L.G."/>
            <person name="Aidinis V."/>
            <person name="Allen J.E."/>
            <person name="Ambesi-Impiombato A."/>
            <person name="Apweiler R."/>
            <person name="Aturaliya R.N."/>
            <person name="Bailey T.L."/>
            <person name="Bansal M."/>
            <person name="Baxter L."/>
            <person name="Beisel K.W."/>
            <person name="Bersano T."/>
            <person name="Bono H."/>
            <person name="Chalk A.M."/>
            <person name="Chiu K.P."/>
            <person name="Choudhary V."/>
            <person name="Christoffels A."/>
            <person name="Clutterbuck D.R."/>
            <person name="Crowe M.L."/>
            <person name="Dalla E."/>
            <person name="Dalrymple B.P."/>
            <person name="de Bono B."/>
            <person name="Della Gatta G."/>
            <person name="di Bernardo D."/>
            <person name="Down T."/>
            <person name="Engstrom P."/>
            <person name="Fagiolini M."/>
            <person name="Faulkner G."/>
            <person name="Fletcher C.F."/>
            <person name="Fukushima T."/>
            <person name="Furuno M."/>
            <person name="Futaki S."/>
            <person name="Gariboldi M."/>
            <person name="Georgii-Hemming P."/>
            <person name="Gingeras T.R."/>
            <person name="Gojobori T."/>
            <person name="Green R.E."/>
            <person name="Gustincich S."/>
            <person name="Harbers M."/>
            <person name="Hayashi Y."/>
            <person name="Hensch T.K."/>
            <person name="Hirokawa N."/>
            <person name="Hill D."/>
            <person name="Huminiecki L."/>
            <person name="Iacono M."/>
            <person name="Ikeo K."/>
            <person name="Iwama A."/>
            <person name="Ishikawa T."/>
            <person name="Jakt M."/>
            <person name="Kanapin A."/>
            <person name="Katoh M."/>
            <person name="Kawasawa Y."/>
            <person name="Kelso J."/>
            <person name="Kitamura H."/>
            <person name="Kitano H."/>
            <person name="Kollias G."/>
            <person name="Krishnan S.P."/>
            <person name="Kruger A."/>
            <person name="Kummerfeld S.K."/>
            <person name="Kurochkin I.V."/>
            <person name="Lareau L.F."/>
            <person name="Lazarevic D."/>
            <person name="Lipovich L."/>
            <person name="Liu J."/>
            <person name="Liuni S."/>
            <person name="McWilliam S."/>
            <person name="Madan Babu M."/>
            <person name="Madera M."/>
            <person name="Marchionni L."/>
            <person name="Matsuda H."/>
            <person name="Matsuzawa S."/>
            <person name="Miki H."/>
            <person name="Mignone F."/>
            <person name="Miyake S."/>
            <person name="Morris K."/>
            <person name="Mottagui-Tabar S."/>
            <person name="Mulder N."/>
            <person name="Nakano N."/>
            <person name="Nakauchi H."/>
            <person name="Ng P."/>
            <person name="Nilsson R."/>
            <person name="Nishiguchi S."/>
            <person name="Nishikawa S."/>
            <person name="Nori F."/>
            <person name="Ohara O."/>
            <person name="Okazaki Y."/>
            <person name="Orlando V."/>
            <person name="Pang K.C."/>
            <person name="Pavan W.J."/>
            <person name="Pavesi G."/>
            <person name="Pesole G."/>
            <person name="Petrovsky N."/>
            <person name="Piazza S."/>
            <person name="Reed J."/>
            <person name="Reid J.F."/>
            <person name="Ring B.Z."/>
            <person name="Ringwald M."/>
            <person name="Rost B."/>
            <person name="Ruan Y."/>
            <person name="Salzberg S.L."/>
            <person name="Sandelin A."/>
            <person name="Schneider C."/>
            <person name="Schoenbach C."/>
            <person name="Sekiguchi K."/>
            <person name="Semple C.A."/>
            <person name="Seno S."/>
            <person name="Sessa L."/>
            <person name="Sheng Y."/>
            <person name="Shibata Y."/>
            <person name="Shimada H."/>
            <person name="Shimada K."/>
            <person name="Silva D."/>
            <person name="Sinclair B."/>
            <person name="Sperling S."/>
            <person name="Stupka E."/>
            <person name="Sugiura K."/>
            <person name="Sultana R."/>
            <person name="Takenaka Y."/>
            <person name="Taki K."/>
            <person name="Tammoja K."/>
            <person name="Tan S.L."/>
            <person name="Tang S."/>
            <person name="Taylor M.S."/>
            <person name="Tegner J."/>
            <person name="Teichmann S.A."/>
            <person name="Ueda H.R."/>
            <person name="van Nimwegen E."/>
            <person name="Verardo R."/>
            <person name="Wei C.L."/>
            <person name="Yagi K."/>
            <person name="Yamanishi H."/>
            <person name="Zabarovsky E."/>
            <person name="Zhu S."/>
            <person name="Zimmer A."/>
            <person name="Hide W."/>
            <person name="Bult C."/>
            <person name="Grimmond S.M."/>
            <person name="Teasdale R.D."/>
            <person name="Liu E.T."/>
            <person name="Brusic V."/>
            <person name="Quackenbush J."/>
            <person name="Wahlestedt C."/>
            <person name="Mattick J.S."/>
            <person name="Hume D.A."/>
            <person name="Kai C."/>
            <person name="Sasaki D."/>
            <person name="Tomaru Y."/>
            <person name="Fukuda S."/>
            <person name="Kanamori-Katayama M."/>
            <person name="Suzuki M."/>
            <person name="Aoki J."/>
            <person name="Arakawa T."/>
            <person name="Iida J."/>
            <person name="Imamura K."/>
            <person name="Itoh M."/>
            <person name="Kato T."/>
            <person name="Kawaji H."/>
            <person name="Kawagashira N."/>
            <person name="Kawashima T."/>
            <person name="Kojima M."/>
            <person name="Kondo S."/>
            <person name="Konno H."/>
            <person name="Nakano K."/>
            <person name="Ninomiya N."/>
            <person name="Nishio T."/>
            <person name="Okada M."/>
            <person name="Plessy C."/>
            <person name="Shibata K."/>
            <person name="Shiraki T."/>
            <person name="Suzuki S."/>
            <person name="Tagami M."/>
            <person name="Waki K."/>
            <person name="Watahiki A."/>
            <person name="Okamura-Oho Y."/>
            <person name="Suzuki H."/>
            <person name="Kawai J."/>
            <person name="Hayashizaki Y."/>
        </authorList>
    </citation>
    <scope>NUCLEOTIDE SEQUENCE [LARGE SCALE MRNA]</scope>
    <source>
        <strain>C57BL/6J</strain>
        <tissue>Stomach</tissue>
    </source>
</reference>
<reference key="2">
    <citation type="journal article" date="2009" name="PLoS Biol.">
        <title>Lineage-specific biology revealed by a finished genome assembly of the mouse.</title>
        <authorList>
            <person name="Church D.M."/>
            <person name="Goodstadt L."/>
            <person name="Hillier L.W."/>
            <person name="Zody M.C."/>
            <person name="Goldstein S."/>
            <person name="She X."/>
            <person name="Bult C.J."/>
            <person name="Agarwala R."/>
            <person name="Cherry J.L."/>
            <person name="DiCuccio M."/>
            <person name="Hlavina W."/>
            <person name="Kapustin Y."/>
            <person name="Meric P."/>
            <person name="Maglott D."/>
            <person name="Birtle Z."/>
            <person name="Marques A.C."/>
            <person name="Graves T."/>
            <person name="Zhou S."/>
            <person name="Teague B."/>
            <person name="Potamousis K."/>
            <person name="Churas C."/>
            <person name="Place M."/>
            <person name="Herschleb J."/>
            <person name="Runnheim R."/>
            <person name="Forrest D."/>
            <person name="Amos-Landgraf J."/>
            <person name="Schwartz D.C."/>
            <person name="Cheng Z."/>
            <person name="Lindblad-Toh K."/>
            <person name="Eichler E.E."/>
            <person name="Ponting C.P."/>
        </authorList>
    </citation>
    <scope>NUCLEOTIDE SEQUENCE [LARGE SCALE GENOMIC DNA]</scope>
    <source>
        <strain>C57BL/6J</strain>
    </source>
</reference>
<reference key="3">
    <citation type="journal article" date="2004" name="Genome Res.">
        <title>The status, quality, and expansion of the NIH full-length cDNA project: the Mammalian Gene Collection (MGC).</title>
        <authorList>
            <consortium name="The MGC Project Team"/>
        </authorList>
    </citation>
    <scope>NUCLEOTIDE SEQUENCE [LARGE SCALE MRNA]</scope>
    <source>
        <strain>FVB/N</strain>
        <tissue>Colon</tissue>
    </source>
</reference>
<accession>Q9D7S1</accession>
<accession>A2A7R3</accession>
<accession>Q8VCL0</accession>
<protein>
    <recommendedName>
        <fullName>Transmembrane protein 54</fullName>
    </recommendedName>
</protein>
<keyword id="KW-0472">Membrane</keyword>
<keyword id="KW-1185">Reference proteome</keyword>
<keyword id="KW-0812">Transmembrane</keyword>
<keyword id="KW-1133">Transmembrane helix</keyword>
<feature type="chain" id="PRO_0000226990" description="Transmembrane protein 54">
    <location>
        <begin position="1"/>
        <end position="219"/>
    </location>
</feature>
<feature type="transmembrane region" description="Helical" evidence="1">
    <location>
        <begin position="22"/>
        <end position="42"/>
    </location>
</feature>
<feature type="transmembrane region" description="Helical" evidence="1">
    <location>
        <begin position="62"/>
        <end position="82"/>
    </location>
</feature>
<feature type="transmembrane region" description="Helical" evidence="1">
    <location>
        <begin position="94"/>
        <end position="114"/>
    </location>
</feature>
<feature type="transmembrane region" description="Helical" evidence="1">
    <location>
        <begin position="155"/>
        <end position="175"/>
    </location>
</feature>
<feature type="sequence conflict" description="In Ref. 3; AAH19563." evidence="2" ref="3">
    <original>C</original>
    <variation>Y</variation>
    <location>
        <position position="195"/>
    </location>
</feature>
<organism>
    <name type="scientific">Mus musculus</name>
    <name type="common">Mouse</name>
    <dbReference type="NCBI Taxonomy" id="10090"/>
    <lineage>
        <taxon>Eukaryota</taxon>
        <taxon>Metazoa</taxon>
        <taxon>Chordata</taxon>
        <taxon>Craniata</taxon>
        <taxon>Vertebrata</taxon>
        <taxon>Euteleostomi</taxon>
        <taxon>Mammalia</taxon>
        <taxon>Eutheria</taxon>
        <taxon>Euarchontoglires</taxon>
        <taxon>Glires</taxon>
        <taxon>Rodentia</taxon>
        <taxon>Myomorpha</taxon>
        <taxon>Muroidea</taxon>
        <taxon>Muridae</taxon>
        <taxon>Murinae</taxon>
        <taxon>Mus</taxon>
        <taxon>Mus</taxon>
    </lineage>
</organism>
<dbReference type="EMBL" id="AK008935">
    <property type="protein sequence ID" value="BAB25977.1"/>
    <property type="molecule type" value="mRNA"/>
</dbReference>
<dbReference type="EMBL" id="AL606977">
    <property type="status" value="NOT_ANNOTATED_CDS"/>
    <property type="molecule type" value="Genomic_DNA"/>
</dbReference>
<dbReference type="EMBL" id="BC019563">
    <property type="protein sequence ID" value="AAH19563.1"/>
    <property type="molecule type" value="mRNA"/>
</dbReference>
<dbReference type="CCDS" id="CCDS18681.1"/>
<dbReference type="RefSeq" id="NP_001277635.1">
    <property type="nucleotide sequence ID" value="NM_001290706.1"/>
</dbReference>
<dbReference type="RefSeq" id="NP_079728.2">
    <property type="nucleotide sequence ID" value="NM_025452.4"/>
</dbReference>
<dbReference type="FunCoup" id="Q9D7S1">
    <property type="interactions" value="13"/>
</dbReference>
<dbReference type="STRING" id="10090.ENSMUSP00000101679"/>
<dbReference type="PhosphoSitePlus" id="Q9D7S1"/>
<dbReference type="PaxDb" id="10090-ENSMUSP00000101679"/>
<dbReference type="ProteomicsDB" id="259130"/>
<dbReference type="Antibodypedia" id="31378">
    <property type="antibodies" value="19 antibodies from 10 providers"/>
</dbReference>
<dbReference type="DNASU" id="66260"/>
<dbReference type="Ensembl" id="ENSMUST00000106064.10">
    <property type="protein sequence ID" value="ENSMUSP00000101679.4"/>
    <property type="gene ID" value="ENSMUSG00000028786.16"/>
</dbReference>
<dbReference type="GeneID" id="66260"/>
<dbReference type="KEGG" id="mmu:66260"/>
<dbReference type="UCSC" id="uc008uvz.2">
    <property type="organism name" value="mouse"/>
</dbReference>
<dbReference type="AGR" id="MGI:1913510"/>
<dbReference type="CTD" id="113452"/>
<dbReference type="MGI" id="MGI:1913510">
    <property type="gene designation" value="Tmem54"/>
</dbReference>
<dbReference type="VEuPathDB" id="HostDB:ENSMUSG00000028786"/>
<dbReference type="eggNOG" id="ENOG502S0UN">
    <property type="taxonomic scope" value="Eukaryota"/>
</dbReference>
<dbReference type="GeneTree" id="ENSGT00390000004700"/>
<dbReference type="InParanoid" id="Q9D7S1"/>
<dbReference type="OMA" id="YVAGPHD"/>
<dbReference type="OrthoDB" id="9389418at2759"/>
<dbReference type="PhylomeDB" id="Q9D7S1"/>
<dbReference type="TreeFam" id="TF332771"/>
<dbReference type="BioGRID-ORCS" id="66260">
    <property type="hits" value="2 hits in 76 CRISPR screens"/>
</dbReference>
<dbReference type="ChiTaRS" id="Tmem54">
    <property type="organism name" value="mouse"/>
</dbReference>
<dbReference type="PRO" id="PR:Q9D7S1"/>
<dbReference type="Proteomes" id="UP000000589">
    <property type="component" value="Chromosome 4"/>
</dbReference>
<dbReference type="RNAct" id="Q9D7S1">
    <property type="molecule type" value="protein"/>
</dbReference>
<dbReference type="Bgee" id="ENSMUSG00000028786">
    <property type="expression patterns" value="Expressed in duodenum and 104 other cell types or tissues"/>
</dbReference>
<dbReference type="ExpressionAtlas" id="Q9D7S1">
    <property type="expression patterns" value="baseline and differential"/>
</dbReference>
<dbReference type="GO" id="GO:0016020">
    <property type="term" value="C:membrane"/>
    <property type="evidence" value="ECO:0007669"/>
    <property type="project" value="UniProtKB-SubCell"/>
</dbReference>
<dbReference type="InterPro" id="IPR020977">
    <property type="entry name" value="Beta-casein-like"/>
</dbReference>
<dbReference type="PANTHER" id="PTHR31258">
    <property type="entry name" value="KERATINOCYTE-ASSOCIATED PROTEIN 3"/>
    <property type="match status" value="1"/>
</dbReference>
<dbReference type="PANTHER" id="PTHR31258:SF2">
    <property type="entry name" value="TRANSMEMBRANE PROTEIN 54"/>
    <property type="match status" value="1"/>
</dbReference>
<dbReference type="Pfam" id="PF12304">
    <property type="entry name" value="BCLP"/>
    <property type="match status" value="1"/>
</dbReference>
<proteinExistence type="evidence at transcript level"/>
<evidence type="ECO:0000255" key="1"/>
<evidence type="ECO:0000305" key="2"/>
<gene>
    <name type="primary">Tmem54</name>
</gene>